<organism>
    <name type="scientific">Arabidopsis thaliana</name>
    <name type="common">Mouse-ear cress</name>
    <dbReference type="NCBI Taxonomy" id="3702"/>
    <lineage>
        <taxon>Eukaryota</taxon>
        <taxon>Viridiplantae</taxon>
        <taxon>Streptophyta</taxon>
        <taxon>Embryophyta</taxon>
        <taxon>Tracheophyta</taxon>
        <taxon>Spermatophyta</taxon>
        <taxon>Magnoliopsida</taxon>
        <taxon>eudicotyledons</taxon>
        <taxon>Gunneridae</taxon>
        <taxon>Pentapetalae</taxon>
        <taxon>rosids</taxon>
        <taxon>malvids</taxon>
        <taxon>Brassicales</taxon>
        <taxon>Brassicaceae</taxon>
        <taxon>Camelineae</taxon>
        <taxon>Arabidopsis</taxon>
    </lineage>
</organism>
<sequence>MEGSEDASAIVEPPDPEVLEIDPTCRYIRYKEVIGKGASKTVFKGFDEVDGIEVAWNQVRIDDLLQSPDCLERLYSEVRLLKSLKHKNIIRFYNSWIDDKNKTVNIITELFTSGSLRQYRKKHRKVNMKAVKCWARQILTGLKYLHSQDPPIIHRDIKCDNIFINGNHGEVKIGDLGLATVMEQANAKSVIGTPEFMAPELYDENYNELADIYSFGMCMLEMVTFEYPYCECRNSAQIYKKVSSGIKPASLSKVKDPEVMKFIEKCLLPASERLSAEELLLDSFLNVNGLVMNNPLPLPDIVMPKEGSFGERCLMSEGPPNARNRTMSMNLDEDNNLPIVISSNNSGTNCIEVRRAKRGNFFVLKGEENDENSVSLILRIVDENGRVRNIHFLFFQEGDTASNVSSEMVEQLELTDKNVKFIAELIDVLLVNLIPNWKTDVAVDHLIHPQQNQSSKDNHQNGASSQAGESISHSLSSDYCPRSDDEANPTVAATTEDQEAEKPGSLEEEEEDERLKEELEKIEERFREEMKEITRKREEATMETKNRFFEKKMQQVE</sequence>
<name>WNK7_ARATH</name>
<protein>
    <recommendedName>
        <fullName>Probable serine/threonine-protein kinase WNK7</fullName>
        <shortName>AtWNK7</shortName>
        <ecNumber>2.7.11.1</ecNumber>
    </recommendedName>
    <alternativeName>
        <fullName>Protein kinase with no lysine 7</fullName>
    </alternativeName>
</protein>
<proteinExistence type="evidence at transcript level"/>
<dbReference type="EC" id="2.7.11.1"/>
<dbReference type="EMBL" id="AB085617">
    <property type="protein sequence ID" value="BAB92986.1"/>
    <property type="molecule type" value="mRNA"/>
</dbReference>
<dbReference type="EMBL" id="AC016041">
    <property type="protein sequence ID" value="AAF69698.1"/>
    <property type="status" value="ALT_SEQ"/>
    <property type="molecule type" value="Genomic_DNA"/>
</dbReference>
<dbReference type="EMBL" id="CP002684">
    <property type="protein sequence ID" value="AEE32397.1"/>
    <property type="molecule type" value="Genomic_DNA"/>
</dbReference>
<dbReference type="EMBL" id="CP002684">
    <property type="protein sequence ID" value="AEE32398.1"/>
    <property type="molecule type" value="Genomic_DNA"/>
</dbReference>
<dbReference type="EMBL" id="AF360136">
    <property type="protein sequence ID" value="AAK25846.1"/>
    <property type="molecule type" value="mRNA"/>
</dbReference>
<dbReference type="RefSeq" id="NP_564541.1">
    <molecule id="Q8LST2-2"/>
    <property type="nucleotide sequence ID" value="NM_103806.2"/>
</dbReference>
<dbReference type="RefSeq" id="NP_849787.1">
    <molecule id="Q8LST2-1"/>
    <property type="nucleotide sequence ID" value="NM_179456.3"/>
</dbReference>
<dbReference type="SMR" id="Q8LST2"/>
<dbReference type="FunCoup" id="Q8LST2">
    <property type="interactions" value="1618"/>
</dbReference>
<dbReference type="STRING" id="3702.Q8LST2"/>
<dbReference type="iPTMnet" id="Q8LST2"/>
<dbReference type="PaxDb" id="3702-AT1G49160.2"/>
<dbReference type="ProteomicsDB" id="242790">
    <molecule id="Q8LST2-1"/>
</dbReference>
<dbReference type="EnsemblPlants" id="AT1G49160.1">
    <molecule id="Q8LST2-2"/>
    <property type="protein sequence ID" value="AT1G49160.1"/>
    <property type="gene ID" value="AT1G49160"/>
</dbReference>
<dbReference type="EnsemblPlants" id="AT1G49160.2">
    <molecule id="Q8LST2-1"/>
    <property type="protein sequence ID" value="AT1G49160.2"/>
    <property type="gene ID" value="AT1G49160"/>
</dbReference>
<dbReference type="GeneID" id="841339"/>
<dbReference type="Gramene" id="AT1G49160.1">
    <molecule id="Q8LST2-2"/>
    <property type="protein sequence ID" value="AT1G49160.1"/>
    <property type="gene ID" value="AT1G49160"/>
</dbReference>
<dbReference type="Gramene" id="AT1G49160.2">
    <molecule id="Q8LST2-1"/>
    <property type="protein sequence ID" value="AT1G49160.2"/>
    <property type="gene ID" value="AT1G49160"/>
</dbReference>
<dbReference type="KEGG" id="ath:AT1G49160"/>
<dbReference type="Araport" id="AT1G49160"/>
<dbReference type="TAIR" id="AT1G49160">
    <property type="gene designation" value="WNK7"/>
</dbReference>
<dbReference type="eggNOG" id="KOG0584">
    <property type="taxonomic scope" value="Eukaryota"/>
</dbReference>
<dbReference type="HOGENOM" id="CLU_000288_142_0_1"/>
<dbReference type="InParanoid" id="Q8LST2"/>
<dbReference type="PhylomeDB" id="Q8LST2"/>
<dbReference type="PRO" id="PR:Q8LST2"/>
<dbReference type="Proteomes" id="UP000006548">
    <property type="component" value="Chromosome 1"/>
</dbReference>
<dbReference type="ExpressionAtlas" id="Q8LST2">
    <property type="expression patterns" value="baseline and differential"/>
</dbReference>
<dbReference type="GO" id="GO:0005524">
    <property type="term" value="F:ATP binding"/>
    <property type="evidence" value="ECO:0007669"/>
    <property type="project" value="UniProtKB-KW"/>
</dbReference>
<dbReference type="GO" id="GO:0004672">
    <property type="term" value="F:protein kinase activity"/>
    <property type="evidence" value="ECO:0000304"/>
    <property type="project" value="TAIR"/>
</dbReference>
<dbReference type="GO" id="GO:0106310">
    <property type="term" value="F:protein serine kinase activity"/>
    <property type="evidence" value="ECO:0007669"/>
    <property type="project" value="RHEA"/>
</dbReference>
<dbReference type="GO" id="GO:0004674">
    <property type="term" value="F:protein serine/threonine kinase activity"/>
    <property type="evidence" value="ECO:0007669"/>
    <property type="project" value="UniProtKB-KW"/>
</dbReference>
<dbReference type="GO" id="GO:0006468">
    <property type="term" value="P:protein phosphorylation"/>
    <property type="evidence" value="ECO:0000304"/>
    <property type="project" value="TAIR"/>
</dbReference>
<dbReference type="CDD" id="cd13983">
    <property type="entry name" value="STKc_WNK"/>
    <property type="match status" value="1"/>
</dbReference>
<dbReference type="FunFam" id="3.30.200.20:FF:000075">
    <property type="entry name" value="Probable serine/threonine-protein kinase WNK1"/>
    <property type="match status" value="1"/>
</dbReference>
<dbReference type="FunFam" id="1.10.510.10:FF:000046">
    <property type="entry name" value="probable serine/threonine-protein kinase WNK9"/>
    <property type="match status" value="1"/>
</dbReference>
<dbReference type="Gene3D" id="3.10.20.90">
    <property type="entry name" value="Phosphatidylinositol 3-kinase Catalytic Subunit, Chain A, domain 1"/>
    <property type="match status" value="1"/>
</dbReference>
<dbReference type="Gene3D" id="3.30.200.20">
    <property type="entry name" value="Phosphorylase Kinase, domain 1"/>
    <property type="match status" value="1"/>
</dbReference>
<dbReference type="Gene3D" id="1.10.510.10">
    <property type="entry name" value="Transferase(Phosphotransferase) domain 1"/>
    <property type="match status" value="1"/>
</dbReference>
<dbReference type="InterPro" id="IPR011009">
    <property type="entry name" value="Kinase-like_dom_sf"/>
</dbReference>
<dbReference type="InterPro" id="IPR000719">
    <property type="entry name" value="Prot_kinase_dom"/>
</dbReference>
<dbReference type="InterPro" id="IPR008271">
    <property type="entry name" value="Ser/Thr_kinase_AS"/>
</dbReference>
<dbReference type="InterPro" id="IPR050588">
    <property type="entry name" value="WNK_Ser-Thr_kinase"/>
</dbReference>
<dbReference type="PANTHER" id="PTHR13902">
    <property type="entry name" value="SERINE/THREONINE-PROTEIN KINASE WNK WITH NO LYSINE -RELATED"/>
    <property type="match status" value="1"/>
</dbReference>
<dbReference type="Pfam" id="PF00069">
    <property type="entry name" value="Pkinase"/>
    <property type="match status" value="1"/>
</dbReference>
<dbReference type="SMART" id="SM00220">
    <property type="entry name" value="S_TKc"/>
    <property type="match status" value="1"/>
</dbReference>
<dbReference type="SUPFAM" id="SSF56112">
    <property type="entry name" value="Protein kinase-like (PK-like)"/>
    <property type="match status" value="1"/>
</dbReference>
<dbReference type="PROSITE" id="PS50011">
    <property type="entry name" value="PROTEIN_KINASE_DOM"/>
    <property type="match status" value="1"/>
</dbReference>
<dbReference type="PROSITE" id="PS00108">
    <property type="entry name" value="PROTEIN_KINASE_ST"/>
    <property type="match status" value="1"/>
</dbReference>
<accession>Q8LST2</accession>
<accession>Q9C5N1</accession>
<accession>Q9M9B6</accession>
<feature type="chain" id="PRO_0000351665" description="Probable serine/threonine-protein kinase WNK7">
    <location>
        <begin position="1"/>
        <end position="557"/>
    </location>
</feature>
<feature type="domain" description="Protein kinase" evidence="5">
    <location>
        <begin position="28"/>
        <end position="285"/>
    </location>
</feature>
<feature type="region of interest" description="Disordered" evidence="6">
    <location>
        <begin position="451"/>
        <end position="517"/>
    </location>
</feature>
<feature type="compositionally biased region" description="Polar residues" evidence="6">
    <location>
        <begin position="451"/>
        <end position="477"/>
    </location>
</feature>
<feature type="active site" description="Proton acceptor" evidence="3">
    <location>
        <position position="175"/>
    </location>
</feature>
<feature type="binding site" evidence="2">
    <location>
        <begin position="108"/>
        <end position="111"/>
    </location>
    <ligand>
        <name>ATP</name>
        <dbReference type="ChEBI" id="CHEBI:30616"/>
    </ligand>
</feature>
<feature type="binding site" evidence="2">
    <location>
        <position position="158"/>
    </location>
    <ligand>
        <name>ATP</name>
        <dbReference type="ChEBI" id="CHEBI:30616"/>
    </ligand>
</feature>
<feature type="modified residue" description="Phosphoserine" evidence="4">
    <location>
        <position position="505"/>
    </location>
</feature>
<feature type="splice variant" id="VSP_035531" description="In isoform 2." evidence="7">
    <original>MEGSEDASAIVEPPDPEVLEIDPTCRYIRYKEVIGKGASKTV</original>
    <variation>MLLQLLNHLTQKFLKSTQLVDIFG</variation>
    <location>
        <begin position="1"/>
        <end position="42"/>
    </location>
</feature>
<comment type="function">
    <text evidence="1">May regulate flowering time by modulating the photoperiod pathway.</text>
</comment>
<comment type="catalytic activity">
    <reaction>
        <text>L-seryl-[protein] + ATP = O-phospho-L-seryl-[protein] + ADP + H(+)</text>
        <dbReference type="Rhea" id="RHEA:17989"/>
        <dbReference type="Rhea" id="RHEA-COMP:9863"/>
        <dbReference type="Rhea" id="RHEA-COMP:11604"/>
        <dbReference type="ChEBI" id="CHEBI:15378"/>
        <dbReference type="ChEBI" id="CHEBI:29999"/>
        <dbReference type="ChEBI" id="CHEBI:30616"/>
        <dbReference type="ChEBI" id="CHEBI:83421"/>
        <dbReference type="ChEBI" id="CHEBI:456216"/>
        <dbReference type="EC" id="2.7.11.1"/>
    </reaction>
</comment>
<comment type="catalytic activity">
    <reaction>
        <text>L-threonyl-[protein] + ATP = O-phospho-L-threonyl-[protein] + ADP + H(+)</text>
        <dbReference type="Rhea" id="RHEA:46608"/>
        <dbReference type="Rhea" id="RHEA-COMP:11060"/>
        <dbReference type="Rhea" id="RHEA-COMP:11605"/>
        <dbReference type="ChEBI" id="CHEBI:15378"/>
        <dbReference type="ChEBI" id="CHEBI:30013"/>
        <dbReference type="ChEBI" id="CHEBI:30616"/>
        <dbReference type="ChEBI" id="CHEBI:61977"/>
        <dbReference type="ChEBI" id="CHEBI:456216"/>
        <dbReference type="EC" id="2.7.11.1"/>
    </reaction>
</comment>
<comment type="alternative products">
    <event type="alternative splicing"/>
    <isoform>
        <id>Q8LST2-1</id>
        <name>1</name>
        <sequence type="displayed"/>
    </isoform>
    <isoform>
        <id>Q8LST2-2</id>
        <name>2</name>
        <sequence type="described" ref="VSP_035531"/>
    </isoform>
</comment>
<comment type="miscellaneous">
    <molecule>Isoform 2</molecule>
    <text evidence="8">May be due to exon skipping.</text>
</comment>
<comment type="similarity">
    <text evidence="5">Belongs to the protein kinase superfamily. Ser/Thr protein kinase family. WNK subfamily.</text>
</comment>
<comment type="caution">
    <text evidence="2">Was named WNK/'with no lysine(K)' because key residues for catalysis, including the lysine involved in ATP binding, are either not conserved or differ compared to the residues described in other kinase family proteins.</text>
</comment>
<evidence type="ECO:0000250" key="1"/>
<evidence type="ECO:0000250" key="2">
    <source>
        <dbReference type="UniProtKB" id="Q9H4A3"/>
    </source>
</evidence>
<evidence type="ECO:0000250" key="3">
    <source>
        <dbReference type="UniProtKB" id="Q9JIH7"/>
    </source>
</evidence>
<evidence type="ECO:0000250" key="4">
    <source>
        <dbReference type="UniProtKB" id="Q9LVL5"/>
    </source>
</evidence>
<evidence type="ECO:0000255" key="5">
    <source>
        <dbReference type="PROSITE-ProRule" id="PRU00159"/>
    </source>
</evidence>
<evidence type="ECO:0000256" key="6">
    <source>
        <dbReference type="SAM" id="MobiDB-lite"/>
    </source>
</evidence>
<evidence type="ECO:0000303" key="7">
    <source>
    </source>
</evidence>
<evidence type="ECO:0000305" key="8"/>
<gene>
    <name type="primary">WNK7</name>
    <name type="ordered locus">At1g49160</name>
    <name type="ORF">F27J15.7</name>
</gene>
<keyword id="KW-0025">Alternative splicing</keyword>
<keyword id="KW-0067">ATP-binding</keyword>
<keyword id="KW-0418">Kinase</keyword>
<keyword id="KW-0547">Nucleotide-binding</keyword>
<keyword id="KW-0597">Phosphoprotein</keyword>
<keyword id="KW-1185">Reference proteome</keyword>
<keyword id="KW-0723">Serine/threonine-protein kinase</keyword>
<keyword id="KW-0808">Transferase</keyword>
<reference key="1">
    <citation type="journal article" date="2002" name="Biosci. Biotechnol. Biochem.">
        <title>Compilation and characterization of a novel WNK family of protein kinases in Arabiodpsis thaliana with reference to circadian rhythms.</title>
        <authorList>
            <person name="Nakamichi N."/>
            <person name="Murakami-Kojima M."/>
            <person name="Sato E."/>
            <person name="Kishi Y."/>
            <person name="Yamashino T."/>
            <person name="Mizuno T."/>
        </authorList>
    </citation>
    <scope>NUCLEOTIDE SEQUENCE [MRNA] (ISOFORM 1)</scope>
    <source>
        <strain>cv. Columbia</strain>
    </source>
</reference>
<reference key="2">
    <citation type="journal article" date="2000" name="Nature">
        <title>Sequence and analysis of chromosome 1 of the plant Arabidopsis thaliana.</title>
        <authorList>
            <person name="Theologis A."/>
            <person name="Ecker J.R."/>
            <person name="Palm C.J."/>
            <person name="Federspiel N.A."/>
            <person name="Kaul S."/>
            <person name="White O."/>
            <person name="Alonso J."/>
            <person name="Altafi H."/>
            <person name="Araujo R."/>
            <person name="Bowman C.L."/>
            <person name="Brooks S.Y."/>
            <person name="Buehler E."/>
            <person name="Chan A."/>
            <person name="Chao Q."/>
            <person name="Chen H."/>
            <person name="Cheuk R.F."/>
            <person name="Chin C.W."/>
            <person name="Chung M.K."/>
            <person name="Conn L."/>
            <person name="Conway A.B."/>
            <person name="Conway A.R."/>
            <person name="Creasy T.H."/>
            <person name="Dewar K."/>
            <person name="Dunn P."/>
            <person name="Etgu P."/>
            <person name="Feldblyum T.V."/>
            <person name="Feng J.-D."/>
            <person name="Fong B."/>
            <person name="Fujii C.Y."/>
            <person name="Gill J.E."/>
            <person name="Goldsmith A.D."/>
            <person name="Haas B."/>
            <person name="Hansen N.F."/>
            <person name="Hughes B."/>
            <person name="Huizar L."/>
            <person name="Hunter J.L."/>
            <person name="Jenkins J."/>
            <person name="Johnson-Hopson C."/>
            <person name="Khan S."/>
            <person name="Khaykin E."/>
            <person name="Kim C.J."/>
            <person name="Koo H.L."/>
            <person name="Kremenetskaia I."/>
            <person name="Kurtz D.B."/>
            <person name="Kwan A."/>
            <person name="Lam B."/>
            <person name="Langin-Hooper S."/>
            <person name="Lee A."/>
            <person name="Lee J.M."/>
            <person name="Lenz C.A."/>
            <person name="Li J.H."/>
            <person name="Li Y.-P."/>
            <person name="Lin X."/>
            <person name="Liu S.X."/>
            <person name="Liu Z.A."/>
            <person name="Luros J.S."/>
            <person name="Maiti R."/>
            <person name="Marziali A."/>
            <person name="Militscher J."/>
            <person name="Miranda M."/>
            <person name="Nguyen M."/>
            <person name="Nierman W.C."/>
            <person name="Osborne B.I."/>
            <person name="Pai G."/>
            <person name="Peterson J."/>
            <person name="Pham P.K."/>
            <person name="Rizzo M."/>
            <person name="Rooney T."/>
            <person name="Rowley D."/>
            <person name="Sakano H."/>
            <person name="Salzberg S.L."/>
            <person name="Schwartz J.R."/>
            <person name="Shinn P."/>
            <person name="Southwick A.M."/>
            <person name="Sun H."/>
            <person name="Tallon L.J."/>
            <person name="Tambunga G."/>
            <person name="Toriumi M.J."/>
            <person name="Town C.D."/>
            <person name="Utterback T."/>
            <person name="Van Aken S."/>
            <person name="Vaysberg M."/>
            <person name="Vysotskaia V.S."/>
            <person name="Walker M."/>
            <person name="Wu D."/>
            <person name="Yu G."/>
            <person name="Fraser C.M."/>
            <person name="Venter J.C."/>
            <person name="Davis R.W."/>
        </authorList>
    </citation>
    <scope>NUCLEOTIDE SEQUENCE [LARGE SCALE GENOMIC DNA]</scope>
    <source>
        <strain>cv. Columbia</strain>
    </source>
</reference>
<reference key="3">
    <citation type="journal article" date="2017" name="Plant J.">
        <title>Araport11: a complete reannotation of the Arabidopsis thaliana reference genome.</title>
        <authorList>
            <person name="Cheng C.Y."/>
            <person name="Krishnakumar V."/>
            <person name="Chan A.P."/>
            <person name="Thibaud-Nissen F."/>
            <person name="Schobel S."/>
            <person name="Town C.D."/>
        </authorList>
    </citation>
    <scope>GENOME REANNOTATION</scope>
    <source>
        <strain>cv. Columbia</strain>
    </source>
</reference>
<reference key="4">
    <citation type="journal article" date="2003" name="Science">
        <title>Empirical analysis of transcriptional activity in the Arabidopsis genome.</title>
        <authorList>
            <person name="Yamada K."/>
            <person name="Lim J."/>
            <person name="Dale J.M."/>
            <person name="Chen H."/>
            <person name="Shinn P."/>
            <person name="Palm C.J."/>
            <person name="Southwick A.M."/>
            <person name="Wu H.C."/>
            <person name="Kim C.J."/>
            <person name="Nguyen M."/>
            <person name="Pham P.K."/>
            <person name="Cheuk R.F."/>
            <person name="Karlin-Newmann G."/>
            <person name="Liu S.X."/>
            <person name="Lam B."/>
            <person name="Sakano H."/>
            <person name="Wu T."/>
            <person name="Yu G."/>
            <person name="Miranda M."/>
            <person name="Quach H.L."/>
            <person name="Tripp M."/>
            <person name="Chang C.H."/>
            <person name="Lee J.M."/>
            <person name="Toriumi M.J."/>
            <person name="Chan M.M."/>
            <person name="Tang C.C."/>
            <person name="Onodera C.S."/>
            <person name="Deng J.M."/>
            <person name="Akiyama K."/>
            <person name="Ansari Y."/>
            <person name="Arakawa T."/>
            <person name="Banh J."/>
            <person name="Banno F."/>
            <person name="Bowser L."/>
            <person name="Brooks S.Y."/>
            <person name="Carninci P."/>
            <person name="Chao Q."/>
            <person name="Choy N."/>
            <person name="Enju A."/>
            <person name="Goldsmith A.D."/>
            <person name="Gurjal M."/>
            <person name="Hansen N.F."/>
            <person name="Hayashizaki Y."/>
            <person name="Johnson-Hopson C."/>
            <person name="Hsuan V.W."/>
            <person name="Iida K."/>
            <person name="Karnes M."/>
            <person name="Khan S."/>
            <person name="Koesema E."/>
            <person name="Ishida J."/>
            <person name="Jiang P.X."/>
            <person name="Jones T."/>
            <person name="Kawai J."/>
            <person name="Kamiya A."/>
            <person name="Meyers C."/>
            <person name="Nakajima M."/>
            <person name="Narusaka M."/>
            <person name="Seki M."/>
            <person name="Sakurai T."/>
            <person name="Satou M."/>
            <person name="Tamse R."/>
            <person name="Vaysberg M."/>
            <person name="Wallender E.K."/>
            <person name="Wong C."/>
            <person name="Yamamura Y."/>
            <person name="Yuan S."/>
            <person name="Shinozaki K."/>
            <person name="Davis R.W."/>
            <person name="Theologis A."/>
            <person name="Ecker J.R."/>
        </authorList>
    </citation>
    <scope>NUCLEOTIDE SEQUENCE [LARGE SCALE MRNA] (ISOFORM 2)</scope>
    <source>
        <strain>cv. Columbia</strain>
    </source>
</reference>